<proteinExistence type="inferred from homology"/>
<sequence>MPRANEIKKGMVLNYNGKLLLAKDIDIQSPTARGAATLYKMRFSDVRTGLKVEERFKGDDIVDTVTLTRRYVDFSYVDGNEYVFMDKEDYTPYTFTKDQIEEELLFMPEGGMPDMQVLTWDGQLLALELPQTVDLEIVETAPGIKGASASARNKPATLSTGLVIQVPEYLSPGEKIRIHIEERRYMGRAD</sequence>
<accession>Q0T2V0</accession>
<protein>
    <recommendedName>
        <fullName evidence="1">Elongation factor P-like protein</fullName>
    </recommendedName>
</protein>
<evidence type="ECO:0000255" key="1">
    <source>
        <dbReference type="HAMAP-Rule" id="MF_00646"/>
    </source>
</evidence>
<evidence type="ECO:0000305" key="2"/>
<dbReference type="EMBL" id="CP000266">
    <property type="protein sequence ID" value="ABF04365.1"/>
    <property type="status" value="ALT_INIT"/>
    <property type="molecule type" value="Genomic_DNA"/>
</dbReference>
<dbReference type="RefSeq" id="WP_001136824.1">
    <property type="nucleotide sequence ID" value="NC_008258.1"/>
</dbReference>
<dbReference type="SMR" id="Q0T2V0"/>
<dbReference type="KEGG" id="sfv:SFV_2249"/>
<dbReference type="HOGENOM" id="CLU_074944_2_0_6"/>
<dbReference type="Proteomes" id="UP000000659">
    <property type="component" value="Chromosome"/>
</dbReference>
<dbReference type="GO" id="GO:0005829">
    <property type="term" value="C:cytosol"/>
    <property type="evidence" value="ECO:0007669"/>
    <property type="project" value="UniProtKB-ARBA"/>
</dbReference>
<dbReference type="GO" id="GO:0003746">
    <property type="term" value="F:translation elongation factor activity"/>
    <property type="evidence" value="ECO:0007669"/>
    <property type="project" value="UniProtKB-UniRule"/>
</dbReference>
<dbReference type="GO" id="GO:0043043">
    <property type="term" value="P:peptide biosynthetic process"/>
    <property type="evidence" value="ECO:0007669"/>
    <property type="project" value="InterPro"/>
</dbReference>
<dbReference type="CDD" id="cd04470">
    <property type="entry name" value="S1_EF-P_repeat_1"/>
    <property type="match status" value="1"/>
</dbReference>
<dbReference type="CDD" id="cd05794">
    <property type="entry name" value="S1_EF-P_repeat_2"/>
    <property type="match status" value="1"/>
</dbReference>
<dbReference type="FunFam" id="2.40.50.140:FF:000004">
    <property type="entry name" value="Elongation factor P"/>
    <property type="match status" value="1"/>
</dbReference>
<dbReference type="FunFam" id="2.30.30.30:FF:000011">
    <property type="entry name" value="Elongation factor P-like protein"/>
    <property type="match status" value="1"/>
</dbReference>
<dbReference type="FunFam" id="2.40.50.140:FF:000053">
    <property type="entry name" value="Elongation factor P-like protein"/>
    <property type="match status" value="1"/>
</dbReference>
<dbReference type="Gene3D" id="2.30.30.30">
    <property type="match status" value="1"/>
</dbReference>
<dbReference type="Gene3D" id="2.40.50.140">
    <property type="entry name" value="Nucleic acid-binding proteins"/>
    <property type="match status" value="2"/>
</dbReference>
<dbReference type="HAMAP" id="MF_00646">
    <property type="entry name" value="EFP"/>
    <property type="match status" value="1"/>
</dbReference>
<dbReference type="InterPro" id="IPR015365">
    <property type="entry name" value="Elong-fact-P_C"/>
</dbReference>
<dbReference type="InterPro" id="IPR012340">
    <property type="entry name" value="NA-bd_OB-fold"/>
</dbReference>
<dbReference type="InterPro" id="IPR014722">
    <property type="entry name" value="Rib_uL2_dom2"/>
</dbReference>
<dbReference type="InterPro" id="IPR020599">
    <property type="entry name" value="Transl_elong_fac_P/YeiP"/>
</dbReference>
<dbReference type="InterPro" id="IPR013185">
    <property type="entry name" value="Transl_elong_KOW-like"/>
</dbReference>
<dbReference type="InterPro" id="IPR011897">
    <property type="entry name" value="Transl_elong_p-like_YeiP"/>
</dbReference>
<dbReference type="InterPro" id="IPR001059">
    <property type="entry name" value="Transl_elong_P/YeiP_cen"/>
</dbReference>
<dbReference type="InterPro" id="IPR013852">
    <property type="entry name" value="Transl_elong_P/YeiP_CS"/>
</dbReference>
<dbReference type="InterPro" id="IPR008991">
    <property type="entry name" value="Translation_prot_SH3-like_sf"/>
</dbReference>
<dbReference type="NCBIfam" id="NF001810">
    <property type="entry name" value="PRK00529.1"/>
    <property type="match status" value="1"/>
</dbReference>
<dbReference type="NCBIfam" id="NF003392">
    <property type="entry name" value="PRK04542.1"/>
    <property type="match status" value="1"/>
</dbReference>
<dbReference type="NCBIfam" id="TIGR02178">
    <property type="entry name" value="yeiP"/>
    <property type="match status" value="1"/>
</dbReference>
<dbReference type="PANTHER" id="PTHR30053">
    <property type="entry name" value="ELONGATION FACTOR P"/>
    <property type="match status" value="1"/>
</dbReference>
<dbReference type="PANTHER" id="PTHR30053:SF14">
    <property type="entry name" value="TRANSLATION ELONGATION FACTOR KOW-LIKE DOMAIN-CONTAINING PROTEIN"/>
    <property type="match status" value="1"/>
</dbReference>
<dbReference type="Pfam" id="PF01132">
    <property type="entry name" value="EFP"/>
    <property type="match status" value="1"/>
</dbReference>
<dbReference type="Pfam" id="PF08207">
    <property type="entry name" value="EFP_N"/>
    <property type="match status" value="1"/>
</dbReference>
<dbReference type="Pfam" id="PF09285">
    <property type="entry name" value="Elong-fact-P_C"/>
    <property type="match status" value="1"/>
</dbReference>
<dbReference type="PIRSF" id="PIRSF005901">
    <property type="entry name" value="EF-P"/>
    <property type="match status" value="1"/>
</dbReference>
<dbReference type="SMART" id="SM01185">
    <property type="entry name" value="EFP"/>
    <property type="match status" value="1"/>
</dbReference>
<dbReference type="SMART" id="SM00841">
    <property type="entry name" value="Elong-fact-P_C"/>
    <property type="match status" value="1"/>
</dbReference>
<dbReference type="SUPFAM" id="SSF50249">
    <property type="entry name" value="Nucleic acid-binding proteins"/>
    <property type="match status" value="2"/>
</dbReference>
<dbReference type="SUPFAM" id="SSF50104">
    <property type="entry name" value="Translation proteins SH3-like domain"/>
    <property type="match status" value="1"/>
</dbReference>
<dbReference type="PROSITE" id="PS01275">
    <property type="entry name" value="EFP"/>
    <property type="match status" value="1"/>
</dbReference>
<feature type="chain" id="PRO_0000384926" description="Elongation factor P-like protein">
    <location>
        <begin position="1"/>
        <end position="190"/>
    </location>
</feature>
<organism>
    <name type="scientific">Shigella flexneri serotype 5b (strain 8401)</name>
    <dbReference type="NCBI Taxonomy" id="373384"/>
    <lineage>
        <taxon>Bacteria</taxon>
        <taxon>Pseudomonadati</taxon>
        <taxon>Pseudomonadota</taxon>
        <taxon>Gammaproteobacteria</taxon>
        <taxon>Enterobacterales</taxon>
        <taxon>Enterobacteriaceae</taxon>
        <taxon>Shigella</taxon>
    </lineage>
</organism>
<comment type="similarity">
    <text evidence="1">Belongs to the elongation factor P family.</text>
</comment>
<comment type="sequence caution" evidence="2">
    <conflict type="erroneous initiation">
        <sequence resource="EMBL-CDS" id="ABF04365"/>
    </conflict>
</comment>
<gene>
    <name evidence="1" type="primary">yeiP</name>
    <name type="ordered locus">SFV_2249</name>
</gene>
<reference key="1">
    <citation type="journal article" date="2006" name="BMC Genomics">
        <title>Complete genome sequence of Shigella flexneri 5b and comparison with Shigella flexneri 2a.</title>
        <authorList>
            <person name="Nie H."/>
            <person name="Yang F."/>
            <person name="Zhang X."/>
            <person name="Yang J."/>
            <person name="Chen L."/>
            <person name="Wang J."/>
            <person name="Xiong Z."/>
            <person name="Peng J."/>
            <person name="Sun L."/>
            <person name="Dong J."/>
            <person name="Xue Y."/>
            <person name="Xu X."/>
            <person name="Chen S."/>
            <person name="Yao Z."/>
            <person name="Shen Y."/>
            <person name="Jin Q."/>
        </authorList>
    </citation>
    <scope>NUCLEOTIDE SEQUENCE [LARGE SCALE GENOMIC DNA]</scope>
    <source>
        <strain>8401</strain>
    </source>
</reference>
<name>EFPL_SHIF8</name>